<reference key="1">
    <citation type="submission" date="2008-04" db="EMBL/GenBank/DDBJ databases">
        <title>Complete sequence of chromosome 1 of Burkholderia ambifaria MC40-6.</title>
        <authorList>
            <person name="Copeland A."/>
            <person name="Lucas S."/>
            <person name="Lapidus A."/>
            <person name="Glavina del Rio T."/>
            <person name="Dalin E."/>
            <person name="Tice H."/>
            <person name="Pitluck S."/>
            <person name="Chain P."/>
            <person name="Malfatti S."/>
            <person name="Shin M."/>
            <person name="Vergez L."/>
            <person name="Lang D."/>
            <person name="Schmutz J."/>
            <person name="Larimer F."/>
            <person name="Land M."/>
            <person name="Hauser L."/>
            <person name="Kyrpides N."/>
            <person name="Lykidis A."/>
            <person name="Ramette A."/>
            <person name="Konstantinidis K."/>
            <person name="Tiedje J."/>
            <person name="Richardson P."/>
        </authorList>
    </citation>
    <scope>NUCLEOTIDE SEQUENCE [LARGE SCALE GENOMIC DNA]</scope>
    <source>
        <strain>MC40-6</strain>
    </source>
</reference>
<gene>
    <name evidence="1" type="primary">leuS</name>
    <name type="ordered locus">BamMC406_0575</name>
</gene>
<protein>
    <recommendedName>
        <fullName evidence="1">Leucine--tRNA ligase</fullName>
        <ecNumber evidence="1">6.1.1.4</ecNumber>
    </recommendedName>
    <alternativeName>
        <fullName evidence="1">Leucyl-tRNA synthetase</fullName>
        <shortName evidence="1">LeuRS</shortName>
    </alternativeName>
</protein>
<organism>
    <name type="scientific">Burkholderia ambifaria (strain MC40-6)</name>
    <dbReference type="NCBI Taxonomy" id="398577"/>
    <lineage>
        <taxon>Bacteria</taxon>
        <taxon>Pseudomonadati</taxon>
        <taxon>Pseudomonadota</taxon>
        <taxon>Betaproteobacteria</taxon>
        <taxon>Burkholderiales</taxon>
        <taxon>Burkholderiaceae</taxon>
        <taxon>Burkholderia</taxon>
        <taxon>Burkholderia cepacia complex</taxon>
    </lineage>
</organism>
<keyword id="KW-0030">Aminoacyl-tRNA synthetase</keyword>
<keyword id="KW-0067">ATP-binding</keyword>
<keyword id="KW-0963">Cytoplasm</keyword>
<keyword id="KW-0436">Ligase</keyword>
<keyword id="KW-0547">Nucleotide-binding</keyword>
<keyword id="KW-0648">Protein biosynthesis</keyword>
<accession>B1YTA7</accession>
<name>SYL_BURA4</name>
<evidence type="ECO:0000255" key="1">
    <source>
        <dbReference type="HAMAP-Rule" id="MF_00049"/>
    </source>
</evidence>
<sequence>MHERYVPADVEAAAQGDWRAADAYKTREDSQKPKFYCVSMLPYPSGKLHMGHVRNYTINDVMYRYLRMNGYNTLMPMGWDAFGMPAENAAMANGVPPAKWTYDNIDYMKGQMQSMGLAIDWSREIATCKPDYYKWNQWLFLKMLEKGIAYKKTGTVNWDPVDQTVLANEQVIDGRGWRSGALVEKREIPMYYLRITQYADELLNDLDGLGWPERVKIMQQNWIGKSFGVNFGFPYELDGEKALLRVFTTRADTIMGVTFCAVAAEHPLATRLAQGKPELQAFIDECKRGGVAEADVATMEKKGVATGFSVSHPLTGEPVEVWIGNYVLMSYGEGAVMGVPGHDERDFAFAKKYGLPIKQVIASEGQTYSLDAWQEWYGDKETAVCVNSGKYDGLRYADAVDAVAADLKAGGYGDKQVTWRLRDWGVSRQRYWGTPIPIIHCPSCGDVPVPEQDLPVVLPEDLVPDGSGNPLAKSEAFLNCSCPKCGAAAKRETDTMDTFVDSSWYFSRYTAPDADTMVDARTDYWMPMDQYIGGIEHAILHLLYSRFWTKVMRDLGLVKFGEPAKNLLTQGMVLNETFYREDASGKKTWYNPADVTVTHDDKGRPVGATLNTDGQPVVLGGIEKMSKSKNNGVDPQVLIDQYGADTARLFTMFAAPPEQQLEWSGAGVEGASRFLRRVWSFGATNREALAARAGFDAAALGDADKALRREIYSVLKQADFDYQRLQYNTVVSAAMKMLNAIDGAKGATPAVLRETYGVLLRVLYPVVPHVTFELWKALGYADEFGPLLDAPWPKVDEAALEQAEIELVLQVNGKVRGALKVAKGASRDAIEAAAVADEAFAKFSDGKPAKKIVVVPGRLVNIVV</sequence>
<comment type="catalytic activity">
    <reaction evidence="1">
        <text>tRNA(Leu) + L-leucine + ATP = L-leucyl-tRNA(Leu) + AMP + diphosphate</text>
        <dbReference type="Rhea" id="RHEA:11688"/>
        <dbReference type="Rhea" id="RHEA-COMP:9613"/>
        <dbReference type="Rhea" id="RHEA-COMP:9622"/>
        <dbReference type="ChEBI" id="CHEBI:30616"/>
        <dbReference type="ChEBI" id="CHEBI:33019"/>
        <dbReference type="ChEBI" id="CHEBI:57427"/>
        <dbReference type="ChEBI" id="CHEBI:78442"/>
        <dbReference type="ChEBI" id="CHEBI:78494"/>
        <dbReference type="ChEBI" id="CHEBI:456215"/>
        <dbReference type="EC" id="6.1.1.4"/>
    </reaction>
</comment>
<comment type="subcellular location">
    <subcellularLocation>
        <location evidence="1">Cytoplasm</location>
    </subcellularLocation>
</comment>
<comment type="similarity">
    <text evidence="1">Belongs to the class-I aminoacyl-tRNA synthetase family.</text>
</comment>
<proteinExistence type="inferred from homology"/>
<feature type="chain" id="PRO_1000091296" description="Leucine--tRNA ligase">
    <location>
        <begin position="1"/>
        <end position="864"/>
    </location>
</feature>
<feature type="short sequence motif" description="'HIGH' region">
    <location>
        <begin position="42"/>
        <end position="52"/>
    </location>
</feature>
<feature type="short sequence motif" description="'KMSKS' region">
    <location>
        <begin position="624"/>
        <end position="628"/>
    </location>
</feature>
<feature type="binding site" evidence="1">
    <location>
        <position position="627"/>
    </location>
    <ligand>
        <name>ATP</name>
        <dbReference type="ChEBI" id="CHEBI:30616"/>
    </ligand>
</feature>
<dbReference type="EC" id="6.1.1.4" evidence="1"/>
<dbReference type="EMBL" id="CP001025">
    <property type="protein sequence ID" value="ACB63072.1"/>
    <property type="molecule type" value="Genomic_DNA"/>
</dbReference>
<dbReference type="RefSeq" id="WP_012363082.1">
    <property type="nucleotide sequence ID" value="NC_010551.1"/>
</dbReference>
<dbReference type="SMR" id="B1YTA7"/>
<dbReference type="KEGG" id="bac:BamMC406_0575"/>
<dbReference type="HOGENOM" id="CLU_004427_0_0_4"/>
<dbReference type="OrthoDB" id="9810365at2"/>
<dbReference type="Proteomes" id="UP000001680">
    <property type="component" value="Chromosome 1"/>
</dbReference>
<dbReference type="GO" id="GO:0005829">
    <property type="term" value="C:cytosol"/>
    <property type="evidence" value="ECO:0007669"/>
    <property type="project" value="TreeGrafter"/>
</dbReference>
<dbReference type="GO" id="GO:0002161">
    <property type="term" value="F:aminoacyl-tRNA deacylase activity"/>
    <property type="evidence" value="ECO:0007669"/>
    <property type="project" value="InterPro"/>
</dbReference>
<dbReference type="GO" id="GO:0005524">
    <property type="term" value="F:ATP binding"/>
    <property type="evidence" value="ECO:0007669"/>
    <property type="project" value="UniProtKB-UniRule"/>
</dbReference>
<dbReference type="GO" id="GO:0004823">
    <property type="term" value="F:leucine-tRNA ligase activity"/>
    <property type="evidence" value="ECO:0007669"/>
    <property type="project" value="UniProtKB-UniRule"/>
</dbReference>
<dbReference type="GO" id="GO:0006429">
    <property type="term" value="P:leucyl-tRNA aminoacylation"/>
    <property type="evidence" value="ECO:0007669"/>
    <property type="project" value="UniProtKB-UniRule"/>
</dbReference>
<dbReference type="CDD" id="cd07958">
    <property type="entry name" value="Anticodon_Ia_Leu_BEm"/>
    <property type="match status" value="1"/>
</dbReference>
<dbReference type="CDD" id="cd00812">
    <property type="entry name" value="LeuRS_core"/>
    <property type="match status" value="1"/>
</dbReference>
<dbReference type="FunFam" id="1.10.730.10:FF:000002">
    <property type="entry name" value="Leucine--tRNA ligase"/>
    <property type="match status" value="1"/>
</dbReference>
<dbReference type="FunFam" id="2.20.28.290:FF:000001">
    <property type="entry name" value="Leucine--tRNA ligase"/>
    <property type="match status" value="1"/>
</dbReference>
<dbReference type="FunFam" id="3.40.50.620:FF:000003">
    <property type="entry name" value="Leucine--tRNA ligase"/>
    <property type="match status" value="1"/>
</dbReference>
<dbReference type="FunFam" id="3.40.50.620:FF:000056">
    <property type="entry name" value="Leucine--tRNA ligase"/>
    <property type="match status" value="1"/>
</dbReference>
<dbReference type="FunFam" id="3.90.740.10:FF:000012">
    <property type="entry name" value="Leucine--tRNA ligase"/>
    <property type="match status" value="1"/>
</dbReference>
<dbReference type="Gene3D" id="2.20.28.290">
    <property type="match status" value="1"/>
</dbReference>
<dbReference type="Gene3D" id="3.10.20.590">
    <property type="match status" value="1"/>
</dbReference>
<dbReference type="Gene3D" id="3.40.50.620">
    <property type="entry name" value="HUPs"/>
    <property type="match status" value="2"/>
</dbReference>
<dbReference type="Gene3D" id="1.10.730.10">
    <property type="entry name" value="Isoleucyl-tRNA Synthetase, Domain 1"/>
    <property type="match status" value="2"/>
</dbReference>
<dbReference type="HAMAP" id="MF_00049_B">
    <property type="entry name" value="Leu_tRNA_synth_B"/>
    <property type="match status" value="1"/>
</dbReference>
<dbReference type="InterPro" id="IPR001412">
    <property type="entry name" value="aa-tRNA-synth_I_CS"/>
</dbReference>
<dbReference type="InterPro" id="IPR002300">
    <property type="entry name" value="aa-tRNA-synth_Ia"/>
</dbReference>
<dbReference type="InterPro" id="IPR002302">
    <property type="entry name" value="Leu-tRNA-ligase"/>
</dbReference>
<dbReference type="InterPro" id="IPR025709">
    <property type="entry name" value="Leu_tRNA-synth_edit"/>
</dbReference>
<dbReference type="InterPro" id="IPR013155">
    <property type="entry name" value="M/V/L/I-tRNA-synth_anticd-bd"/>
</dbReference>
<dbReference type="InterPro" id="IPR015413">
    <property type="entry name" value="Methionyl/Leucyl_tRNA_Synth"/>
</dbReference>
<dbReference type="InterPro" id="IPR014729">
    <property type="entry name" value="Rossmann-like_a/b/a_fold"/>
</dbReference>
<dbReference type="InterPro" id="IPR009080">
    <property type="entry name" value="tRNAsynth_Ia_anticodon-bd"/>
</dbReference>
<dbReference type="InterPro" id="IPR009008">
    <property type="entry name" value="Val/Leu/Ile-tRNA-synth_edit"/>
</dbReference>
<dbReference type="NCBIfam" id="TIGR00396">
    <property type="entry name" value="leuS_bact"/>
    <property type="match status" value="1"/>
</dbReference>
<dbReference type="PANTHER" id="PTHR43740:SF2">
    <property type="entry name" value="LEUCINE--TRNA LIGASE, MITOCHONDRIAL"/>
    <property type="match status" value="1"/>
</dbReference>
<dbReference type="PANTHER" id="PTHR43740">
    <property type="entry name" value="LEUCYL-TRNA SYNTHETASE"/>
    <property type="match status" value="1"/>
</dbReference>
<dbReference type="Pfam" id="PF08264">
    <property type="entry name" value="Anticodon_1"/>
    <property type="match status" value="1"/>
</dbReference>
<dbReference type="Pfam" id="PF00133">
    <property type="entry name" value="tRNA-synt_1"/>
    <property type="match status" value="2"/>
</dbReference>
<dbReference type="Pfam" id="PF13603">
    <property type="entry name" value="tRNA-synt_1_2"/>
    <property type="match status" value="1"/>
</dbReference>
<dbReference type="Pfam" id="PF09334">
    <property type="entry name" value="tRNA-synt_1g"/>
    <property type="match status" value="1"/>
</dbReference>
<dbReference type="PRINTS" id="PR00985">
    <property type="entry name" value="TRNASYNTHLEU"/>
</dbReference>
<dbReference type="SUPFAM" id="SSF47323">
    <property type="entry name" value="Anticodon-binding domain of a subclass of class I aminoacyl-tRNA synthetases"/>
    <property type="match status" value="1"/>
</dbReference>
<dbReference type="SUPFAM" id="SSF52374">
    <property type="entry name" value="Nucleotidylyl transferase"/>
    <property type="match status" value="1"/>
</dbReference>
<dbReference type="SUPFAM" id="SSF50677">
    <property type="entry name" value="ValRS/IleRS/LeuRS editing domain"/>
    <property type="match status" value="1"/>
</dbReference>
<dbReference type="PROSITE" id="PS00178">
    <property type="entry name" value="AA_TRNA_LIGASE_I"/>
    <property type="match status" value="1"/>
</dbReference>